<sequence>MDAKLLELLVCPVTKGPLRFDREHQELVSRSARLAYPVRDGIPVLLEAEARTLDDDELED</sequence>
<accession>A9BWI3</accession>
<reference key="1">
    <citation type="submission" date="2007-11" db="EMBL/GenBank/DDBJ databases">
        <title>Complete sequence of Delftia acidovorans DSM 14801 / SPH-1.</title>
        <authorList>
            <person name="Copeland A."/>
            <person name="Lucas S."/>
            <person name="Lapidus A."/>
            <person name="Barry K."/>
            <person name="Glavina del Rio T."/>
            <person name="Dalin E."/>
            <person name="Tice H."/>
            <person name="Pitluck S."/>
            <person name="Lowry S."/>
            <person name="Clum A."/>
            <person name="Schmutz J."/>
            <person name="Larimer F."/>
            <person name="Land M."/>
            <person name="Hauser L."/>
            <person name="Kyrpides N."/>
            <person name="Kim E."/>
            <person name="Schleheck D."/>
            <person name="Richardson P."/>
        </authorList>
    </citation>
    <scope>NUCLEOTIDE SEQUENCE [LARGE SCALE GENOMIC DNA]</scope>
    <source>
        <strain>DSM 14801 / SPH-1</strain>
    </source>
</reference>
<feature type="chain" id="PRO_1000138301" description="UPF0434 protein Daci_3569">
    <location>
        <begin position="1"/>
        <end position="60"/>
    </location>
</feature>
<keyword id="KW-1185">Reference proteome</keyword>
<protein>
    <recommendedName>
        <fullName evidence="1">UPF0434 protein Daci_3569</fullName>
    </recommendedName>
</protein>
<evidence type="ECO:0000255" key="1">
    <source>
        <dbReference type="HAMAP-Rule" id="MF_01187"/>
    </source>
</evidence>
<organism>
    <name type="scientific">Delftia acidovorans (strain DSM 14801 / SPH-1)</name>
    <dbReference type="NCBI Taxonomy" id="398578"/>
    <lineage>
        <taxon>Bacteria</taxon>
        <taxon>Pseudomonadati</taxon>
        <taxon>Pseudomonadota</taxon>
        <taxon>Betaproteobacteria</taxon>
        <taxon>Burkholderiales</taxon>
        <taxon>Comamonadaceae</taxon>
        <taxon>Delftia</taxon>
    </lineage>
</organism>
<dbReference type="EMBL" id="CP000884">
    <property type="protein sequence ID" value="ABX36203.1"/>
    <property type="molecule type" value="Genomic_DNA"/>
</dbReference>
<dbReference type="RefSeq" id="WP_012205403.1">
    <property type="nucleotide sequence ID" value="NC_010002.1"/>
</dbReference>
<dbReference type="SMR" id="A9BWI3"/>
<dbReference type="STRING" id="398578.Daci_3569"/>
<dbReference type="GeneID" id="24115727"/>
<dbReference type="KEGG" id="dac:Daci_3569"/>
<dbReference type="eggNOG" id="COG2835">
    <property type="taxonomic scope" value="Bacteria"/>
</dbReference>
<dbReference type="HOGENOM" id="CLU_155659_2_2_4"/>
<dbReference type="Proteomes" id="UP000000784">
    <property type="component" value="Chromosome"/>
</dbReference>
<dbReference type="GO" id="GO:0005829">
    <property type="term" value="C:cytosol"/>
    <property type="evidence" value="ECO:0007669"/>
    <property type="project" value="TreeGrafter"/>
</dbReference>
<dbReference type="FunFam" id="2.20.25.10:FF:000002">
    <property type="entry name" value="UPF0434 protein YcaR"/>
    <property type="match status" value="1"/>
</dbReference>
<dbReference type="Gene3D" id="2.20.25.10">
    <property type="match status" value="1"/>
</dbReference>
<dbReference type="HAMAP" id="MF_01187">
    <property type="entry name" value="UPF0434"/>
    <property type="match status" value="1"/>
</dbReference>
<dbReference type="InterPro" id="IPR005651">
    <property type="entry name" value="Trm112-like"/>
</dbReference>
<dbReference type="PANTHER" id="PTHR33505:SF4">
    <property type="entry name" value="PROTEIN PREY, MITOCHONDRIAL"/>
    <property type="match status" value="1"/>
</dbReference>
<dbReference type="PANTHER" id="PTHR33505">
    <property type="entry name" value="ZGC:162634"/>
    <property type="match status" value="1"/>
</dbReference>
<dbReference type="Pfam" id="PF03966">
    <property type="entry name" value="Trm112p"/>
    <property type="match status" value="1"/>
</dbReference>
<dbReference type="SUPFAM" id="SSF158997">
    <property type="entry name" value="Trm112p-like"/>
    <property type="match status" value="1"/>
</dbReference>
<name>Y3569_DELAS</name>
<proteinExistence type="inferred from homology"/>
<comment type="similarity">
    <text evidence="1">Belongs to the UPF0434 family.</text>
</comment>
<gene>
    <name type="ordered locus">Daci_3569</name>
</gene>